<sequence>MAFRAICVLVGVFICSICVRGSSQPQARVYLTFDELRETKTSEYFSLSHQQLDYRILLMDEDQDRIYVGSKDHILSLNINNISQEPLSVFWPASTIKVEECKMAGKDPTHGCGNFVRVIQTFNRTHLYVCGSGAFSPVCTYLNRGRRSEDQVFMIDSKCESGKGRCSFNPNVNTVSVMINEELFSGMYIDFMGTDAAIFRSLTKRNAVRTDQHNSKWLSEPMFVDAHVIPDGTDPNDAKVYFFFKERLTDNNRSTKQIHSMIARICPNDTGGQRSLVNKWTTFLKARLVCSVTDEDGPETHFDELEDVFLLETDNPRTTLVYGIFTTSSSVFKGSAVCVYHLSDIQTVFNGPFAHKEGPNHQLISYQGRIPYPRPGTCPGGAFTPNMRTTKDFPDDVVTFIRNHPLMYNSIYPIHRRPLIVRIGTDYKYTKIAVDRVNAADGRYHVLFLGTDRGTVQKVVVLPTNSSASGELILEELEVFKNHVPITTMKISSKKQQLYVSSNEGVSQVSLHRCHIYGTACADCCLARDPYCAWDGHSCSRFYPTGKRRSRRQDVRHGNPLTQCRGFNLKAYRNAAEIVQYGVRNNSTFLECAPKSPQASIKWLLQKDKDRRKEVKLNERIIATSQGLLIRSVQDSDQGLYHCIATENSFKQTIAKINFKVLDSEMVAVVTDKWSPWTWAGSVRALPFHPKDILGAFSHSEMQLINQYCKDTRQQQQLGEEPQKMRGDYGKLKALINSRKSRNRRNQLPES</sequence>
<feature type="signal peptide" evidence="2">
    <location>
        <begin position="1"/>
        <end position="20"/>
    </location>
</feature>
<feature type="chain" id="PRO_0000032312" description="Semaphorin-3C">
    <location>
        <begin position="21"/>
        <end position="751"/>
    </location>
</feature>
<feature type="domain" description="Sema" evidence="3">
    <location>
        <begin position="28"/>
        <end position="511"/>
    </location>
</feature>
<feature type="domain" description="Ig-like C2-type">
    <location>
        <begin position="571"/>
        <end position="655"/>
    </location>
</feature>
<feature type="glycosylation site" description="N-linked (GlcNAc...) asparagine" evidence="2">
    <location>
        <position position="81"/>
    </location>
</feature>
<feature type="glycosylation site" description="N-linked (GlcNAc...) asparagine" evidence="2">
    <location>
        <position position="123"/>
    </location>
</feature>
<feature type="glycosylation site" description="N-linked (GlcNAc...) asparagine" evidence="2">
    <location>
        <position position="252"/>
    </location>
</feature>
<feature type="glycosylation site" description="N-linked (GlcNAc...) asparagine" evidence="2">
    <location>
        <position position="268"/>
    </location>
</feature>
<feature type="glycosylation site" description="N-linked (GlcNAc...) asparagine" evidence="2">
    <location>
        <position position="465"/>
    </location>
</feature>
<feature type="glycosylation site" description="N-linked (GlcNAc...) asparagine" evidence="2">
    <location>
        <position position="585"/>
    </location>
</feature>
<feature type="glycosylation site" description="N-linked (GlcNAc...) asparagine" evidence="2">
    <location>
        <position position="586"/>
    </location>
</feature>
<feature type="disulfide bond" evidence="1">
    <location>
        <begin position="101"/>
        <end position="112"/>
    </location>
</feature>
<feature type="disulfide bond" evidence="1">
    <location>
        <begin position="130"/>
        <end position="139"/>
    </location>
</feature>
<feature type="disulfide bond" evidence="1">
    <location>
        <begin position="266"/>
        <end position="378"/>
    </location>
</feature>
<feature type="disulfide bond" evidence="1">
    <location>
        <begin position="290"/>
        <end position="338"/>
    </location>
</feature>
<feature type="disulfide bond" evidence="1">
    <location>
        <begin position="514"/>
        <end position="532"/>
    </location>
</feature>
<feature type="disulfide bond" evidence="1">
    <location>
        <begin position="643"/>
        <end position="709"/>
    </location>
</feature>
<feature type="sequence conflict" description="In Ref. 1; CAA59986." evidence="7" ref="1">
    <original>NAV</original>
    <variation>MQL</variation>
    <location>
        <begin position="206"/>
        <end position="208"/>
    </location>
</feature>
<feature type="sequence conflict" description="In Ref. 1; CAA59986." evidence="7" ref="1">
    <original>Y</original>
    <variation>S</variation>
    <location>
        <position position="412"/>
    </location>
</feature>
<feature type="sequence conflict" description="In Ref. 1; CAA59986." evidence="7" ref="1">
    <original>K</original>
    <variation>E</variation>
    <location>
        <position position="490"/>
    </location>
</feature>
<feature type="sequence conflict" description="In Ref. 1; CAA59986." evidence="7" ref="1">
    <original>V</original>
    <variation>G</variation>
    <location>
        <position position="615"/>
    </location>
</feature>
<organism>
    <name type="scientific">Mus musculus</name>
    <name type="common">Mouse</name>
    <dbReference type="NCBI Taxonomy" id="10090"/>
    <lineage>
        <taxon>Eukaryota</taxon>
        <taxon>Metazoa</taxon>
        <taxon>Chordata</taxon>
        <taxon>Craniata</taxon>
        <taxon>Vertebrata</taxon>
        <taxon>Euteleostomi</taxon>
        <taxon>Mammalia</taxon>
        <taxon>Eutheria</taxon>
        <taxon>Euarchontoglires</taxon>
        <taxon>Glires</taxon>
        <taxon>Rodentia</taxon>
        <taxon>Myomorpha</taxon>
        <taxon>Muroidea</taxon>
        <taxon>Muridae</taxon>
        <taxon>Murinae</taxon>
        <taxon>Mus</taxon>
        <taxon>Mus</taxon>
    </lineage>
</organism>
<protein>
    <recommendedName>
        <fullName>Semaphorin-3C</fullName>
    </recommendedName>
    <alternativeName>
        <fullName>Semaphorin-E</fullName>
        <shortName>Sema E</shortName>
    </alternativeName>
</protein>
<evidence type="ECO:0000250" key="1"/>
<evidence type="ECO:0000255" key="2"/>
<evidence type="ECO:0000255" key="3">
    <source>
        <dbReference type="PROSITE-ProRule" id="PRU00352"/>
    </source>
</evidence>
<evidence type="ECO:0000269" key="4">
    <source>
    </source>
</evidence>
<evidence type="ECO:0000269" key="5">
    <source>
    </source>
</evidence>
<evidence type="ECO:0000269" key="6">
    <source>
    </source>
</evidence>
<evidence type="ECO:0000305" key="7"/>
<comment type="function">
    <text evidence="4 5 6">Binds to plexin family members and plays an important role in the regulation of developmental processes. Required for normal cardiovascular development during embryogenesis. Functions as attractant for growing axons, and thereby plays an important role in axon growth and axon guidance.</text>
</comment>
<comment type="subunit">
    <text evidence="5">Interacts with PLXND1.</text>
</comment>
<comment type="subcellular location">
    <subcellularLocation>
        <location evidence="1">Secreted</location>
    </subcellularLocation>
</comment>
<comment type="developmental stage">
    <text>Expressed from day 10 in the embryo. Maximum expression between days 10-12 with moderate levels from day 13 until birth.</text>
</comment>
<comment type="disruption phenotype">
    <text evidence="4">Perinatal lethality. Mice display severe defects in cardiovascular development, including aortic arch malformations and septation defects in the cardiac outflow tract.</text>
</comment>
<comment type="similarity">
    <text evidence="7">Belongs to the semaphorin family.</text>
</comment>
<proteinExistence type="evidence at protein level"/>
<name>SEM3C_MOUSE</name>
<gene>
    <name type="primary">Sema3c</name>
    <name type="synonym">Semae</name>
    <name type="synonym">SemE</name>
</gene>
<dbReference type="EMBL" id="X85994">
    <property type="protein sequence ID" value="CAA59986.1"/>
    <property type="molecule type" value="mRNA"/>
</dbReference>
<dbReference type="EMBL" id="CH466586">
    <property type="protein sequence ID" value="EDL03234.1"/>
    <property type="molecule type" value="Genomic_DNA"/>
</dbReference>
<dbReference type="EMBL" id="BC066852">
    <property type="protein sequence ID" value="AAH66852.1"/>
    <property type="molecule type" value="mRNA"/>
</dbReference>
<dbReference type="CCDS" id="CCDS19099.1"/>
<dbReference type="PIR" id="I48748">
    <property type="entry name" value="I48748"/>
</dbReference>
<dbReference type="RefSeq" id="NP_038685.3">
    <property type="nucleotide sequence ID" value="NM_013657.5"/>
</dbReference>
<dbReference type="SMR" id="Q62181"/>
<dbReference type="BioGRID" id="203163">
    <property type="interactions" value="3"/>
</dbReference>
<dbReference type="FunCoup" id="Q62181">
    <property type="interactions" value="279"/>
</dbReference>
<dbReference type="STRING" id="10090.ENSMUSP00000030568"/>
<dbReference type="GlyCosmos" id="Q62181">
    <property type="glycosylation" value="7 sites, No reported glycans"/>
</dbReference>
<dbReference type="GlyGen" id="Q62181">
    <property type="glycosylation" value="7 sites, 4 N-linked glycans (5 sites)"/>
</dbReference>
<dbReference type="iPTMnet" id="Q62181"/>
<dbReference type="PhosphoSitePlus" id="Q62181"/>
<dbReference type="PaxDb" id="10090-ENSMUSP00000030568"/>
<dbReference type="PeptideAtlas" id="Q62181"/>
<dbReference type="ProteomicsDB" id="261150"/>
<dbReference type="Antibodypedia" id="48987">
    <property type="antibodies" value="268 antibodies from 27 providers"/>
</dbReference>
<dbReference type="DNASU" id="20348"/>
<dbReference type="Ensembl" id="ENSMUST00000030568.14">
    <property type="protein sequence ID" value="ENSMUSP00000030568.8"/>
    <property type="gene ID" value="ENSMUSG00000028780.14"/>
</dbReference>
<dbReference type="GeneID" id="20348"/>
<dbReference type="KEGG" id="mmu:20348"/>
<dbReference type="UCSC" id="uc008wnl.1">
    <property type="organism name" value="mouse"/>
</dbReference>
<dbReference type="AGR" id="MGI:107557"/>
<dbReference type="CTD" id="10512"/>
<dbReference type="MGI" id="MGI:107557">
    <property type="gene designation" value="Sema3c"/>
</dbReference>
<dbReference type="VEuPathDB" id="HostDB:ENSMUSG00000028780"/>
<dbReference type="eggNOG" id="KOG3611">
    <property type="taxonomic scope" value="Eukaryota"/>
</dbReference>
<dbReference type="GeneTree" id="ENSGT00940000159379"/>
<dbReference type="HOGENOM" id="CLU_009051_5_0_1"/>
<dbReference type="InParanoid" id="Q62181"/>
<dbReference type="OMA" id="AMYIDFM"/>
<dbReference type="OrthoDB" id="9988752at2759"/>
<dbReference type="PhylomeDB" id="Q62181"/>
<dbReference type="TreeFam" id="TF352628"/>
<dbReference type="BioGRID-ORCS" id="20348">
    <property type="hits" value="1 hit in 78 CRISPR screens"/>
</dbReference>
<dbReference type="ChiTaRS" id="Sema3c">
    <property type="organism name" value="mouse"/>
</dbReference>
<dbReference type="PRO" id="PR:Q62181"/>
<dbReference type="Proteomes" id="UP000000589">
    <property type="component" value="Chromosome 5"/>
</dbReference>
<dbReference type="RNAct" id="Q62181">
    <property type="molecule type" value="protein"/>
</dbReference>
<dbReference type="Bgee" id="ENSMUSG00000028780">
    <property type="expression patterns" value="Expressed in ureter smooth muscle and 276 other cell types or tissues"/>
</dbReference>
<dbReference type="ExpressionAtlas" id="Q62181">
    <property type="expression patterns" value="baseline and differential"/>
</dbReference>
<dbReference type="GO" id="GO:0062023">
    <property type="term" value="C:collagen-containing extracellular matrix"/>
    <property type="evidence" value="ECO:0007005"/>
    <property type="project" value="BHF-UCL"/>
</dbReference>
<dbReference type="GO" id="GO:0005615">
    <property type="term" value="C:extracellular space"/>
    <property type="evidence" value="ECO:0000314"/>
    <property type="project" value="MGI"/>
</dbReference>
<dbReference type="GO" id="GO:0030215">
    <property type="term" value="F:semaphorin receptor binding"/>
    <property type="evidence" value="ECO:0000353"/>
    <property type="project" value="MGI"/>
</dbReference>
<dbReference type="GO" id="GO:0007411">
    <property type="term" value="P:axon guidance"/>
    <property type="evidence" value="ECO:0000314"/>
    <property type="project" value="UniProtKB"/>
</dbReference>
<dbReference type="GO" id="GO:0001974">
    <property type="term" value="P:blood vessel remodeling"/>
    <property type="evidence" value="ECO:0000315"/>
    <property type="project" value="MGI"/>
</dbReference>
<dbReference type="GO" id="GO:0140074">
    <property type="term" value="P:cardiac endothelial to mesenchymal transition"/>
    <property type="evidence" value="ECO:0000314"/>
    <property type="project" value="BHF-UCL"/>
</dbReference>
<dbReference type="GO" id="GO:0003215">
    <property type="term" value="P:cardiac right ventricle morphogenesis"/>
    <property type="evidence" value="ECO:0000270"/>
    <property type="project" value="BHF-UCL"/>
</dbReference>
<dbReference type="GO" id="GO:0060666">
    <property type="term" value="P:dichotomous subdivision of terminal units involved in salivary gland branching"/>
    <property type="evidence" value="ECO:0000314"/>
    <property type="project" value="MGI"/>
</dbReference>
<dbReference type="GO" id="GO:0007507">
    <property type="term" value="P:heart development"/>
    <property type="evidence" value="ECO:0000315"/>
    <property type="project" value="MGI"/>
</dbReference>
<dbReference type="GO" id="GO:0060174">
    <property type="term" value="P:limb bud formation"/>
    <property type="evidence" value="ECO:0000270"/>
    <property type="project" value="BHF-UCL"/>
</dbReference>
<dbReference type="GO" id="GO:0001755">
    <property type="term" value="P:neural crest cell migration"/>
    <property type="evidence" value="ECO:0000315"/>
    <property type="project" value="MGI"/>
</dbReference>
<dbReference type="GO" id="GO:0021915">
    <property type="term" value="P:neural tube development"/>
    <property type="evidence" value="ECO:0000270"/>
    <property type="project" value="BHF-UCL"/>
</dbReference>
<dbReference type="GO" id="GO:0003151">
    <property type="term" value="P:outflow tract morphogenesis"/>
    <property type="evidence" value="ECO:0000270"/>
    <property type="project" value="BHF-UCL"/>
</dbReference>
<dbReference type="GO" id="GO:0003148">
    <property type="term" value="P:outflow tract septum morphogenesis"/>
    <property type="evidence" value="ECO:0000315"/>
    <property type="project" value="BHF-UCL"/>
</dbReference>
<dbReference type="GO" id="GO:1905312">
    <property type="term" value="P:positive regulation of cardiac neural crest cell migration involved in outflow tract morphogenesis"/>
    <property type="evidence" value="ECO:0000314"/>
    <property type="project" value="BHF-UCL"/>
</dbReference>
<dbReference type="GO" id="GO:0009791">
    <property type="term" value="P:post-embryonic development"/>
    <property type="evidence" value="ECO:0000315"/>
    <property type="project" value="MGI"/>
</dbReference>
<dbReference type="GO" id="GO:0003350">
    <property type="term" value="P:pulmonary myocardium development"/>
    <property type="evidence" value="ECO:0000270"/>
    <property type="project" value="BHF-UCL"/>
</dbReference>
<dbReference type="GO" id="GO:0071526">
    <property type="term" value="P:semaphorin-plexin signaling pathway"/>
    <property type="evidence" value="ECO:0000315"/>
    <property type="project" value="BHF-UCL"/>
</dbReference>
<dbReference type="GO" id="GO:0001756">
    <property type="term" value="P:somitogenesis"/>
    <property type="evidence" value="ECO:0000270"/>
    <property type="project" value="BHF-UCL"/>
</dbReference>
<dbReference type="CDD" id="cd05871">
    <property type="entry name" value="Ig_Sema3"/>
    <property type="match status" value="1"/>
</dbReference>
<dbReference type="CDD" id="cd11251">
    <property type="entry name" value="Sema_3C"/>
    <property type="match status" value="1"/>
</dbReference>
<dbReference type="FunFam" id="2.130.10.10:FF:000123">
    <property type="entry name" value="Semaphorin 3C"/>
    <property type="match status" value="1"/>
</dbReference>
<dbReference type="FunFam" id="2.60.40.10:FF:000030">
    <property type="entry name" value="Semaphorin 3F like"/>
    <property type="match status" value="1"/>
</dbReference>
<dbReference type="FunFam" id="3.30.1680.10:FF:000001">
    <property type="entry name" value="Semaphorin 3F like"/>
    <property type="match status" value="1"/>
</dbReference>
<dbReference type="Gene3D" id="2.60.40.10">
    <property type="entry name" value="Immunoglobulins"/>
    <property type="match status" value="1"/>
</dbReference>
<dbReference type="Gene3D" id="3.30.1680.10">
    <property type="entry name" value="ligand-binding face of the semaphorins, domain 2"/>
    <property type="match status" value="1"/>
</dbReference>
<dbReference type="Gene3D" id="2.130.10.10">
    <property type="entry name" value="YVTN repeat-like/Quinoprotein amine dehydrogenase"/>
    <property type="match status" value="1"/>
</dbReference>
<dbReference type="InterPro" id="IPR007110">
    <property type="entry name" value="Ig-like_dom"/>
</dbReference>
<dbReference type="InterPro" id="IPR036179">
    <property type="entry name" value="Ig-like_dom_sf"/>
</dbReference>
<dbReference type="InterPro" id="IPR013783">
    <property type="entry name" value="Ig-like_fold"/>
</dbReference>
<dbReference type="InterPro" id="IPR013098">
    <property type="entry name" value="Ig_I-set"/>
</dbReference>
<dbReference type="InterPro" id="IPR003599">
    <property type="entry name" value="Ig_sub"/>
</dbReference>
<dbReference type="InterPro" id="IPR003598">
    <property type="entry name" value="Ig_sub2"/>
</dbReference>
<dbReference type="InterPro" id="IPR016201">
    <property type="entry name" value="PSI"/>
</dbReference>
<dbReference type="InterPro" id="IPR001627">
    <property type="entry name" value="Semap_dom"/>
</dbReference>
<dbReference type="InterPro" id="IPR036352">
    <property type="entry name" value="Semap_dom_sf"/>
</dbReference>
<dbReference type="InterPro" id="IPR027231">
    <property type="entry name" value="Semaphorin"/>
</dbReference>
<dbReference type="InterPro" id="IPR015943">
    <property type="entry name" value="WD40/YVTN_repeat-like_dom_sf"/>
</dbReference>
<dbReference type="PANTHER" id="PTHR11036">
    <property type="entry name" value="SEMAPHORIN"/>
    <property type="match status" value="1"/>
</dbReference>
<dbReference type="PANTHER" id="PTHR11036:SF25">
    <property type="entry name" value="SEMAPHORIN-3C"/>
    <property type="match status" value="1"/>
</dbReference>
<dbReference type="Pfam" id="PF07679">
    <property type="entry name" value="I-set"/>
    <property type="match status" value="1"/>
</dbReference>
<dbReference type="Pfam" id="PF01403">
    <property type="entry name" value="Sema"/>
    <property type="match status" value="1"/>
</dbReference>
<dbReference type="SMART" id="SM00409">
    <property type="entry name" value="IG"/>
    <property type="match status" value="1"/>
</dbReference>
<dbReference type="SMART" id="SM00408">
    <property type="entry name" value="IGc2"/>
    <property type="match status" value="1"/>
</dbReference>
<dbReference type="SMART" id="SM00423">
    <property type="entry name" value="PSI"/>
    <property type="match status" value="1"/>
</dbReference>
<dbReference type="SMART" id="SM00630">
    <property type="entry name" value="Sema"/>
    <property type="match status" value="1"/>
</dbReference>
<dbReference type="SUPFAM" id="SSF48726">
    <property type="entry name" value="Immunoglobulin"/>
    <property type="match status" value="1"/>
</dbReference>
<dbReference type="SUPFAM" id="SSF103575">
    <property type="entry name" value="Plexin repeat"/>
    <property type="match status" value="1"/>
</dbReference>
<dbReference type="SUPFAM" id="SSF101912">
    <property type="entry name" value="Sema domain"/>
    <property type="match status" value="1"/>
</dbReference>
<dbReference type="PROSITE" id="PS50835">
    <property type="entry name" value="IG_LIKE"/>
    <property type="match status" value="1"/>
</dbReference>
<dbReference type="PROSITE" id="PS51004">
    <property type="entry name" value="SEMA"/>
    <property type="match status" value="1"/>
</dbReference>
<keyword id="KW-0217">Developmental protein</keyword>
<keyword id="KW-0221">Differentiation</keyword>
<keyword id="KW-1015">Disulfide bond</keyword>
<keyword id="KW-0325">Glycoprotein</keyword>
<keyword id="KW-0393">Immunoglobulin domain</keyword>
<keyword id="KW-0524">Neurogenesis</keyword>
<keyword id="KW-1185">Reference proteome</keyword>
<keyword id="KW-0964">Secreted</keyword>
<keyword id="KW-0732">Signal</keyword>
<accession>Q62181</accession>
<accession>Q6NXW7</accession>
<reference key="1">
    <citation type="journal article" date="1995" name="Neuron">
        <title>Murine semaphorin D/collapsin is a member of a diverse gene family and creates domains inhibitory for axonal extension.</title>
        <authorList>
            <person name="Pueschel A.W."/>
            <person name="Adams R.H."/>
            <person name="Betz H."/>
        </authorList>
    </citation>
    <scope>NUCLEOTIDE SEQUENCE [MRNA]</scope>
    <source>
        <strain>NMRI</strain>
        <tissue>Embryo</tissue>
    </source>
</reference>
<reference key="2">
    <citation type="submission" date="2005-09" db="EMBL/GenBank/DDBJ databases">
        <authorList>
            <person name="Mural R.J."/>
            <person name="Adams M.D."/>
            <person name="Myers E.W."/>
            <person name="Smith H.O."/>
            <person name="Venter J.C."/>
        </authorList>
    </citation>
    <scope>NUCLEOTIDE SEQUENCE [LARGE SCALE GENOMIC DNA]</scope>
</reference>
<reference key="3">
    <citation type="journal article" date="2004" name="Genome Res.">
        <title>The status, quality, and expansion of the NIH full-length cDNA project: the Mammalian Gene Collection (MGC).</title>
        <authorList>
            <consortium name="The MGC Project Team"/>
        </authorList>
    </citation>
    <scope>NUCLEOTIDE SEQUENCE [LARGE SCALE MRNA]</scope>
    <source>
        <strain>CD-1</strain>
        <tissue>Neural stem cell</tissue>
    </source>
</reference>
<reference key="4">
    <citation type="journal article" date="2001" name="Development">
        <title>Targeted disruption of semaphorin 3C leads to persistent truncus arteriosus and aortic arch interruption.</title>
        <authorList>
            <person name="Feiner L."/>
            <person name="Webber A.L."/>
            <person name="Brown C.B."/>
            <person name="Lu M.M."/>
            <person name="Jia L."/>
            <person name="Feinstein P."/>
            <person name="Mombaerts P."/>
            <person name="Epstein J.A."/>
            <person name="Raper J.A."/>
        </authorList>
    </citation>
    <scope>DISRUPTION PHENOTYPE</scope>
    <scope>FUNCTION</scope>
</reference>
<reference key="5">
    <citation type="journal article" date="2004" name="Dev. Cell">
        <title>PlexinD1 and semaphorin signaling are required in endothelial cells for cardiovascular development.</title>
        <authorList>
            <person name="Gitler A.D."/>
            <person name="Lu M.M."/>
            <person name="Epstein J.A."/>
        </authorList>
    </citation>
    <scope>FUNCTION</scope>
    <scope>INTERACTION WITH PLXND1</scope>
</reference>
<reference key="6">
    <citation type="journal article" date="2007" name="Cereb. Cortex">
        <title>Functional interaction between matrix metalloproteinase-3 and semaphorin-3C during cortical axonal growth and guidance.</title>
        <authorList>
            <person name="Gonthier B."/>
            <person name="Nasarre C."/>
            <person name="Roth L."/>
            <person name="Perraut M."/>
            <person name="Thomasset N."/>
            <person name="Roussel G."/>
            <person name="Aunis D."/>
            <person name="Bagnard D."/>
        </authorList>
    </citation>
    <scope>FUNCTION</scope>
</reference>